<keyword id="KW-0997">Cell inner membrane</keyword>
<keyword id="KW-1003">Cell membrane</keyword>
<keyword id="KW-0133">Cell shape</keyword>
<keyword id="KW-0238">DNA-binding</keyword>
<keyword id="KW-0472">Membrane</keyword>
<keyword id="KW-1185">Reference proteome</keyword>
<keyword id="KW-0735">Signal-anchor</keyword>
<keyword id="KW-0812">Transmembrane</keyword>
<keyword id="KW-1133">Transmembrane helix</keyword>
<accession>A7ZPV9</accession>
<proteinExistence type="inferred from homology"/>
<organism>
    <name type="scientific">Escherichia coli O139:H28 (strain E24377A / ETEC)</name>
    <dbReference type="NCBI Taxonomy" id="331111"/>
    <lineage>
        <taxon>Bacteria</taxon>
        <taxon>Pseudomonadati</taxon>
        <taxon>Pseudomonadota</taxon>
        <taxon>Gammaproteobacteria</taxon>
        <taxon>Enterobacterales</taxon>
        <taxon>Enterobacteriaceae</taxon>
        <taxon>Escherichia</taxon>
    </lineage>
</organism>
<reference key="1">
    <citation type="journal article" date="2008" name="J. Bacteriol.">
        <title>The pangenome structure of Escherichia coli: comparative genomic analysis of E. coli commensal and pathogenic isolates.</title>
        <authorList>
            <person name="Rasko D.A."/>
            <person name="Rosovitz M.J."/>
            <person name="Myers G.S.A."/>
            <person name="Mongodin E.F."/>
            <person name="Fricke W.F."/>
            <person name="Gajer P."/>
            <person name="Crabtree J."/>
            <person name="Sebaihia M."/>
            <person name="Thomson N.R."/>
            <person name="Chaudhuri R."/>
            <person name="Henderson I.R."/>
            <person name="Sperandio V."/>
            <person name="Ravel J."/>
        </authorList>
    </citation>
    <scope>NUCLEOTIDE SEQUENCE [LARGE SCALE GENOMIC DNA]</scope>
    <source>
        <strain>E24377A / ETEC</strain>
    </source>
</reference>
<sequence>MNTEATHDQNEALTTGARLRNAREQLGLSQQAVAERLCLKVSTVRDIEEDKAPADLASTFLRGYIRSYARLVHIPEEELLPGLEKQAPLRAAKVAPMQSFSLGKRRKKRDGWLMTFTWLVLFVVIGLSGAWWWQDHKAQQEEITTMADQSSAELSSNSEQGQSVPLNTSTTTDPATTSTPPASVDTTATNTQTPAVTAPAPAVDPQQNAVVSPSQANVDTAATPAPTAATTPDGAAPLPTDQAGVTTPVADPNALVMNFTADCWLEVTDATGKRLFSGMQRKDGNLNLTGQAPYKLKIGAPAAVQIQYQGKPVDLSRFIRTNQVARLTLNAEQSPAQ</sequence>
<comment type="function">
    <text evidence="1">Cytoskeletal protein that is involved in cell-shape control through regulation of the length of the long axis.</text>
</comment>
<comment type="subcellular location">
    <subcellularLocation>
        <location evidence="1">Cell inner membrane</location>
        <topology evidence="1">Single-pass type II membrane protein</topology>
    </subcellularLocation>
    <text evidence="1">Forms helical filaments along the long axis of the cell.</text>
</comment>
<comment type="domain">
    <text evidence="1">The helix-turn-helix (HTH) motif in the cytoplasmic domain of the N-terminus is involved in the formation of spirals to maintain the rigid rod shape. As this protein is anchored in the cytoplasmic membrane, the HTH motif may contribute to protein-protein interactions to form the RodZ helix, which is localized beneath the cytoplasmic membrane. The C-terminal domain may be critical for determination of the rod shape by probably interacting with enzymes required for synthesis of the peptidoglycan layer, including PBPs in the periplasm.</text>
</comment>
<comment type="similarity">
    <text evidence="1">Belongs to the RodZ family.</text>
</comment>
<protein>
    <recommendedName>
        <fullName evidence="1">Cytoskeleton protein RodZ</fullName>
    </recommendedName>
</protein>
<dbReference type="EMBL" id="CP000800">
    <property type="protein sequence ID" value="ABV17615.1"/>
    <property type="molecule type" value="Genomic_DNA"/>
</dbReference>
<dbReference type="RefSeq" id="WP_001090846.1">
    <property type="nucleotide sequence ID" value="NC_009801.1"/>
</dbReference>
<dbReference type="SMR" id="A7ZPV9"/>
<dbReference type="KEGG" id="ecw:EcE24377A_2800"/>
<dbReference type="HOGENOM" id="CLU_047530_3_1_6"/>
<dbReference type="Proteomes" id="UP000001122">
    <property type="component" value="Chromosome"/>
</dbReference>
<dbReference type="GO" id="GO:0005886">
    <property type="term" value="C:plasma membrane"/>
    <property type="evidence" value="ECO:0007669"/>
    <property type="project" value="UniProtKB-SubCell"/>
</dbReference>
<dbReference type="GO" id="GO:0003677">
    <property type="term" value="F:DNA binding"/>
    <property type="evidence" value="ECO:0007669"/>
    <property type="project" value="UniProtKB-KW"/>
</dbReference>
<dbReference type="GO" id="GO:0008360">
    <property type="term" value="P:regulation of cell shape"/>
    <property type="evidence" value="ECO:0007669"/>
    <property type="project" value="UniProtKB-UniRule"/>
</dbReference>
<dbReference type="CDD" id="cd00093">
    <property type="entry name" value="HTH_XRE"/>
    <property type="match status" value="1"/>
</dbReference>
<dbReference type="FunFam" id="1.10.260.40:FF:000014">
    <property type="entry name" value="Cytoskeleton protein RodZ"/>
    <property type="match status" value="1"/>
</dbReference>
<dbReference type="Gene3D" id="1.10.260.40">
    <property type="entry name" value="lambda repressor-like DNA-binding domains"/>
    <property type="match status" value="1"/>
</dbReference>
<dbReference type="HAMAP" id="MF_02017">
    <property type="entry name" value="RodZ"/>
    <property type="match status" value="1"/>
</dbReference>
<dbReference type="InterPro" id="IPR050400">
    <property type="entry name" value="Bact_Cytoskel_RodZ"/>
</dbReference>
<dbReference type="InterPro" id="IPR001387">
    <property type="entry name" value="Cro/C1-type_HTH"/>
</dbReference>
<dbReference type="InterPro" id="IPR010982">
    <property type="entry name" value="Lambda_DNA-bd_dom_sf"/>
</dbReference>
<dbReference type="InterPro" id="IPR023690">
    <property type="entry name" value="RodZ"/>
</dbReference>
<dbReference type="InterPro" id="IPR025194">
    <property type="entry name" value="RodZ-like_C"/>
</dbReference>
<dbReference type="NCBIfam" id="NF008109">
    <property type="entry name" value="PRK10856.1"/>
    <property type="match status" value="1"/>
</dbReference>
<dbReference type="PANTHER" id="PTHR34475">
    <property type="match status" value="1"/>
</dbReference>
<dbReference type="PANTHER" id="PTHR34475:SF1">
    <property type="entry name" value="CYTOSKELETON PROTEIN RODZ"/>
    <property type="match status" value="1"/>
</dbReference>
<dbReference type="Pfam" id="PF13413">
    <property type="entry name" value="HTH_25"/>
    <property type="match status" value="1"/>
</dbReference>
<dbReference type="Pfam" id="PF13464">
    <property type="entry name" value="RodZ_C"/>
    <property type="match status" value="1"/>
</dbReference>
<dbReference type="SMART" id="SM00530">
    <property type="entry name" value="HTH_XRE"/>
    <property type="match status" value="1"/>
</dbReference>
<dbReference type="SUPFAM" id="SSF47413">
    <property type="entry name" value="lambda repressor-like DNA-binding domains"/>
    <property type="match status" value="1"/>
</dbReference>
<dbReference type="PROSITE" id="PS50943">
    <property type="entry name" value="HTH_CROC1"/>
    <property type="match status" value="1"/>
</dbReference>
<name>RODZ_ECO24</name>
<evidence type="ECO:0000255" key="1">
    <source>
        <dbReference type="HAMAP-Rule" id="MF_02017"/>
    </source>
</evidence>
<evidence type="ECO:0000256" key="2">
    <source>
        <dbReference type="SAM" id="MobiDB-lite"/>
    </source>
</evidence>
<gene>
    <name evidence="1" type="primary">rodZ</name>
    <name type="ordered locus">EcE24377A_2800</name>
</gene>
<feature type="chain" id="PRO_0000361838" description="Cytoskeleton protein RodZ">
    <location>
        <begin position="1"/>
        <end position="337"/>
    </location>
</feature>
<feature type="topological domain" description="Cytoplasmic" evidence="1">
    <location>
        <begin position="1"/>
        <end position="111"/>
    </location>
</feature>
<feature type="transmembrane region" description="Helical; Signal-anchor for type II membrane protein" evidence="1">
    <location>
        <begin position="112"/>
        <end position="132"/>
    </location>
</feature>
<feature type="topological domain" description="Periplasmic" evidence="1">
    <location>
        <begin position="133"/>
        <end position="337"/>
    </location>
</feature>
<feature type="domain" description="HTH cro/C1-type" evidence="1">
    <location>
        <begin position="19"/>
        <end position="71"/>
    </location>
</feature>
<feature type="DNA-binding region" description="H-T-H motif" evidence="1">
    <location>
        <begin position="30"/>
        <end position="49"/>
    </location>
</feature>
<feature type="region of interest" description="Disordered" evidence="2">
    <location>
        <begin position="145"/>
        <end position="236"/>
    </location>
</feature>
<feature type="compositionally biased region" description="Polar residues" evidence="2">
    <location>
        <begin position="145"/>
        <end position="167"/>
    </location>
</feature>
<feature type="compositionally biased region" description="Low complexity" evidence="2">
    <location>
        <begin position="168"/>
        <end position="207"/>
    </location>
</feature>
<feature type="compositionally biased region" description="Polar residues" evidence="2">
    <location>
        <begin position="208"/>
        <end position="218"/>
    </location>
</feature>
<feature type="compositionally biased region" description="Low complexity" evidence="2">
    <location>
        <begin position="219"/>
        <end position="236"/>
    </location>
</feature>